<dbReference type="EC" id="1.7.99.1" evidence="1"/>
<dbReference type="EMBL" id="CP000503">
    <property type="protein sequence ID" value="ABM25807.1"/>
    <property type="molecule type" value="Genomic_DNA"/>
</dbReference>
<dbReference type="RefSeq" id="WP_011790260.1">
    <property type="nucleotide sequence ID" value="NC_008750.1"/>
</dbReference>
<dbReference type="SMR" id="A1RMB2"/>
<dbReference type="GeneID" id="67442690"/>
<dbReference type="KEGG" id="shw:Sputw3181_2990"/>
<dbReference type="HOGENOM" id="CLU_038344_2_0_6"/>
<dbReference type="Proteomes" id="UP000002597">
    <property type="component" value="Chromosome"/>
</dbReference>
<dbReference type="GO" id="GO:0005737">
    <property type="term" value="C:cytoplasm"/>
    <property type="evidence" value="ECO:0007669"/>
    <property type="project" value="UniProtKB-SubCell"/>
</dbReference>
<dbReference type="GO" id="GO:0051537">
    <property type="term" value="F:2 iron, 2 sulfur cluster binding"/>
    <property type="evidence" value="ECO:0007669"/>
    <property type="project" value="UniProtKB-KW"/>
</dbReference>
<dbReference type="GO" id="GO:0050418">
    <property type="term" value="F:hydroxylamine reductase activity"/>
    <property type="evidence" value="ECO:0007669"/>
    <property type="project" value="UniProtKB-UniRule"/>
</dbReference>
<dbReference type="GO" id="GO:0046872">
    <property type="term" value="F:metal ion binding"/>
    <property type="evidence" value="ECO:0007669"/>
    <property type="project" value="UniProtKB-KW"/>
</dbReference>
<dbReference type="GO" id="GO:0004601">
    <property type="term" value="F:peroxidase activity"/>
    <property type="evidence" value="ECO:0007669"/>
    <property type="project" value="TreeGrafter"/>
</dbReference>
<dbReference type="GO" id="GO:0042542">
    <property type="term" value="P:response to hydrogen peroxide"/>
    <property type="evidence" value="ECO:0007669"/>
    <property type="project" value="TreeGrafter"/>
</dbReference>
<dbReference type="CDD" id="cd01914">
    <property type="entry name" value="HCP"/>
    <property type="match status" value="1"/>
</dbReference>
<dbReference type="FunFam" id="1.20.1270.20:FF:000001">
    <property type="entry name" value="Hydroxylamine reductase"/>
    <property type="match status" value="1"/>
</dbReference>
<dbReference type="FunFam" id="1.20.1270.20:FF:000002">
    <property type="entry name" value="Hydroxylamine reductase"/>
    <property type="match status" value="1"/>
</dbReference>
<dbReference type="FunFam" id="3.40.50.2030:FF:000001">
    <property type="entry name" value="Hydroxylamine reductase"/>
    <property type="match status" value="1"/>
</dbReference>
<dbReference type="FunFam" id="3.40.50.2030:FF:000002">
    <property type="entry name" value="Hydroxylamine reductase"/>
    <property type="match status" value="1"/>
</dbReference>
<dbReference type="Gene3D" id="1.20.1270.20">
    <property type="match status" value="2"/>
</dbReference>
<dbReference type="Gene3D" id="3.40.50.2030">
    <property type="match status" value="2"/>
</dbReference>
<dbReference type="HAMAP" id="MF_00069">
    <property type="entry name" value="Hydroxylam_reduct"/>
    <property type="match status" value="1"/>
</dbReference>
<dbReference type="InterPro" id="IPR004137">
    <property type="entry name" value="HCP/CODH"/>
</dbReference>
<dbReference type="InterPro" id="IPR010048">
    <property type="entry name" value="Hydroxylam_reduct"/>
</dbReference>
<dbReference type="InterPro" id="IPR016099">
    <property type="entry name" value="Prismane-like_a/b-sand"/>
</dbReference>
<dbReference type="InterPro" id="IPR011254">
    <property type="entry name" value="Prismane-like_sf"/>
</dbReference>
<dbReference type="InterPro" id="IPR016100">
    <property type="entry name" value="Prismane_a-bundle"/>
</dbReference>
<dbReference type="NCBIfam" id="TIGR01703">
    <property type="entry name" value="hybrid_clust"/>
    <property type="match status" value="1"/>
</dbReference>
<dbReference type="NCBIfam" id="NF003658">
    <property type="entry name" value="PRK05290.1"/>
    <property type="match status" value="1"/>
</dbReference>
<dbReference type="PANTHER" id="PTHR30109">
    <property type="entry name" value="HYDROXYLAMINE REDUCTASE"/>
    <property type="match status" value="1"/>
</dbReference>
<dbReference type="PANTHER" id="PTHR30109:SF0">
    <property type="entry name" value="HYDROXYLAMINE REDUCTASE"/>
    <property type="match status" value="1"/>
</dbReference>
<dbReference type="Pfam" id="PF03063">
    <property type="entry name" value="Prismane"/>
    <property type="match status" value="1"/>
</dbReference>
<dbReference type="PIRSF" id="PIRSF000076">
    <property type="entry name" value="HCP"/>
    <property type="match status" value="1"/>
</dbReference>
<dbReference type="SUPFAM" id="SSF56821">
    <property type="entry name" value="Prismane protein-like"/>
    <property type="match status" value="1"/>
</dbReference>
<keyword id="KW-0001">2Fe-2S</keyword>
<keyword id="KW-0963">Cytoplasm</keyword>
<keyword id="KW-0408">Iron</keyword>
<keyword id="KW-0411">Iron-sulfur</keyword>
<keyword id="KW-0479">Metal-binding</keyword>
<keyword id="KW-0560">Oxidoreductase</keyword>
<comment type="function">
    <text evidence="1">Catalyzes the reduction of hydroxylamine to form NH(3) and H(2)O.</text>
</comment>
<comment type="catalytic activity">
    <reaction evidence="1">
        <text>A + NH4(+) + H2O = hydroxylamine + AH2 + H(+)</text>
        <dbReference type="Rhea" id="RHEA:22052"/>
        <dbReference type="ChEBI" id="CHEBI:13193"/>
        <dbReference type="ChEBI" id="CHEBI:15377"/>
        <dbReference type="ChEBI" id="CHEBI:15378"/>
        <dbReference type="ChEBI" id="CHEBI:15429"/>
        <dbReference type="ChEBI" id="CHEBI:17499"/>
        <dbReference type="ChEBI" id="CHEBI:28938"/>
        <dbReference type="EC" id="1.7.99.1"/>
    </reaction>
</comment>
<comment type="cofactor">
    <cofactor evidence="1">
        <name>[2Fe-2S] cluster</name>
        <dbReference type="ChEBI" id="CHEBI:190135"/>
    </cofactor>
    <text evidence="1">Binds 1 [2Fe-2S] cluster.</text>
</comment>
<comment type="cofactor">
    <cofactor evidence="1">
        <name>hybrid [4Fe-2O-2S] cluster</name>
        <dbReference type="ChEBI" id="CHEBI:60519"/>
    </cofactor>
    <text evidence="1">Binds 1 hybrid [4Fe-2O-2S] cluster.</text>
</comment>
<comment type="subcellular location">
    <subcellularLocation>
        <location evidence="1">Cytoplasm</location>
    </subcellularLocation>
</comment>
<comment type="similarity">
    <text evidence="1">Belongs to the HCP family.</text>
</comment>
<organism>
    <name type="scientific">Shewanella sp. (strain W3-18-1)</name>
    <dbReference type="NCBI Taxonomy" id="351745"/>
    <lineage>
        <taxon>Bacteria</taxon>
        <taxon>Pseudomonadati</taxon>
        <taxon>Pseudomonadota</taxon>
        <taxon>Gammaproteobacteria</taxon>
        <taxon>Alteromonadales</taxon>
        <taxon>Shewanellaceae</taxon>
        <taxon>Shewanella</taxon>
    </lineage>
</organism>
<gene>
    <name evidence="1" type="primary">hcp</name>
    <name type="ordered locus">Sputw3181_2990</name>
</gene>
<evidence type="ECO:0000255" key="1">
    <source>
        <dbReference type="HAMAP-Rule" id="MF_00069"/>
    </source>
</evidence>
<name>HCP_SHESW</name>
<reference key="1">
    <citation type="submission" date="2006-12" db="EMBL/GenBank/DDBJ databases">
        <title>Complete sequence of Shewanella sp. W3-18-1.</title>
        <authorList>
            <consortium name="US DOE Joint Genome Institute"/>
            <person name="Copeland A."/>
            <person name="Lucas S."/>
            <person name="Lapidus A."/>
            <person name="Barry K."/>
            <person name="Detter J.C."/>
            <person name="Glavina del Rio T."/>
            <person name="Hammon N."/>
            <person name="Israni S."/>
            <person name="Dalin E."/>
            <person name="Tice H."/>
            <person name="Pitluck S."/>
            <person name="Chain P."/>
            <person name="Malfatti S."/>
            <person name="Shin M."/>
            <person name="Vergez L."/>
            <person name="Schmutz J."/>
            <person name="Larimer F."/>
            <person name="Land M."/>
            <person name="Hauser L."/>
            <person name="Kyrpides N."/>
            <person name="Lykidis A."/>
            <person name="Tiedje J."/>
            <person name="Richardson P."/>
        </authorList>
    </citation>
    <scope>NUCLEOTIDE SEQUENCE [LARGE SCALE GENOMIC DNA]</scope>
    <source>
        <strain>W3-18-1</strain>
    </source>
</reference>
<protein>
    <recommendedName>
        <fullName evidence="1">Hydroxylamine reductase</fullName>
        <ecNumber evidence="1">1.7.99.1</ecNumber>
    </recommendedName>
    <alternativeName>
        <fullName evidence="1">Hybrid-cluster protein</fullName>
        <shortName evidence="1">HCP</shortName>
    </alternativeName>
    <alternativeName>
        <fullName evidence="1">Prismane protein</fullName>
    </alternativeName>
</protein>
<accession>A1RMB2</accession>
<proteinExistence type="inferred from homology"/>
<feature type="chain" id="PRO_1000009171" description="Hydroxylamine reductase">
    <location>
        <begin position="1"/>
        <end position="554"/>
    </location>
</feature>
<feature type="binding site" evidence="1">
    <location>
        <position position="3"/>
    </location>
    <ligand>
        <name>[2Fe-2S] cluster</name>
        <dbReference type="ChEBI" id="CHEBI:190135"/>
    </ligand>
</feature>
<feature type="binding site" evidence="1">
    <location>
        <position position="6"/>
    </location>
    <ligand>
        <name>[2Fe-2S] cluster</name>
        <dbReference type="ChEBI" id="CHEBI:190135"/>
    </ligand>
</feature>
<feature type="binding site" evidence="1">
    <location>
        <position position="18"/>
    </location>
    <ligand>
        <name>[2Fe-2S] cluster</name>
        <dbReference type="ChEBI" id="CHEBI:190135"/>
    </ligand>
</feature>
<feature type="binding site" evidence="1">
    <location>
        <position position="25"/>
    </location>
    <ligand>
        <name>[2Fe-2S] cluster</name>
        <dbReference type="ChEBI" id="CHEBI:190135"/>
    </ligand>
</feature>
<feature type="binding site" evidence="1">
    <location>
        <position position="252"/>
    </location>
    <ligand>
        <name>hybrid [4Fe-2O-2S] cluster</name>
        <dbReference type="ChEBI" id="CHEBI:60519"/>
    </ligand>
</feature>
<feature type="binding site" evidence="1">
    <location>
        <position position="276"/>
    </location>
    <ligand>
        <name>hybrid [4Fe-2O-2S] cluster</name>
        <dbReference type="ChEBI" id="CHEBI:60519"/>
    </ligand>
</feature>
<feature type="binding site" evidence="1">
    <location>
        <position position="320"/>
    </location>
    <ligand>
        <name>hybrid [4Fe-2O-2S] cluster</name>
        <dbReference type="ChEBI" id="CHEBI:60519"/>
    </ligand>
</feature>
<feature type="binding site" description="via persulfide group" evidence="1">
    <location>
        <position position="408"/>
    </location>
    <ligand>
        <name>hybrid [4Fe-2O-2S] cluster</name>
        <dbReference type="ChEBI" id="CHEBI:60519"/>
    </ligand>
</feature>
<feature type="binding site" evidence="1">
    <location>
        <position position="436"/>
    </location>
    <ligand>
        <name>hybrid [4Fe-2O-2S] cluster</name>
        <dbReference type="ChEBI" id="CHEBI:60519"/>
    </ligand>
</feature>
<feature type="binding site" evidence="1">
    <location>
        <position position="461"/>
    </location>
    <ligand>
        <name>hybrid [4Fe-2O-2S] cluster</name>
        <dbReference type="ChEBI" id="CHEBI:60519"/>
    </ligand>
</feature>
<feature type="binding site" evidence="1">
    <location>
        <position position="495"/>
    </location>
    <ligand>
        <name>hybrid [4Fe-2O-2S] cluster</name>
        <dbReference type="ChEBI" id="CHEBI:60519"/>
    </ligand>
</feature>
<feature type="binding site" evidence="1">
    <location>
        <position position="497"/>
    </location>
    <ligand>
        <name>hybrid [4Fe-2O-2S] cluster</name>
        <dbReference type="ChEBI" id="CHEBI:60519"/>
    </ligand>
</feature>
<feature type="modified residue" description="Cysteine persulfide" evidence="1">
    <location>
        <position position="408"/>
    </location>
</feature>
<sequence>MFCIQCEQTIRTPAGNGCSYSQGMCGKLAATSDLQDLLIYMLQGVSVYAVKARELGIVDAEIDSFVPKAFFSTLTNVNFDDERIVAYAQQAAKYRASLKAAYELACERAGKVAEQVPEVAQLVLGTSKVEMLSQAPIALLNKDKHEIHEDILGLRLLCLYGLKGAAAYMEHARVLDQTDAEVAGRFHEIMAFLGESSVDGDKLFATAMEIGQLNYRIMAMLDAGETQSFGHPEPTVVNTKSVKGKAILVSGHDMKDLELILEQTVGKGINVYTHGEMLPALAYPAFKKYPHLVGNYGSAWQNQQKEFANFPGAVVMTSNCIIDPNVGSYSDRIFTRSIVGWPGVMHIIGDDFSAVIDKALALEGFNYDEIPHKITIGFARNALMAAAPAVVENVKNGSIKHFFLVGGCDGDKADRSYFTELAKSTPKDSIILTLGCGKYKFNKLEFGDINGIPRLLDVGQCNDAYSAIQLAIALAEVFECDINELPLSLVLSWFEQKAIVVLLTLLSLGVKNIRTGPTPPAFLTANLAKILEDKFGLRNTTTVEADLKTMLNVA</sequence>